<organism>
    <name type="scientific">Paraburkholderia xenovorans (strain LB400)</name>
    <dbReference type="NCBI Taxonomy" id="266265"/>
    <lineage>
        <taxon>Bacteria</taxon>
        <taxon>Pseudomonadati</taxon>
        <taxon>Pseudomonadota</taxon>
        <taxon>Betaproteobacteria</taxon>
        <taxon>Burkholderiales</taxon>
        <taxon>Burkholderiaceae</taxon>
        <taxon>Paraburkholderia</taxon>
    </lineage>
</organism>
<sequence>MDTAQPAMTAPPAQAAADEPVGRVTAVRGAVIDVAFDTGALPMIEDALVITTDDGQPIIAEVQAHLDEGTVRALALRSTNGLRRGAPVRAAGGPIEVPVGEAMLGRLIDVSGVPGDNGTPLPPGTPRRPIHRKPPPLASQGAETRIFATGIKVIDLLTPLAQGGKAAMFGGAGVGKTVLVMELIHAMVERYQGISVFAGVGERCREGHEMLTDMRHSGVLPRTVLVYGQMNEPPGARWRVPLTALTVAEYFRDERHQNVLLLMDNVFRFVQAGAEVSGLLGRLPSRVGYQPTLATEVAGLQERIVSVGDVSVTAIEAVYVPADDFTDPAVTAIAAHVDSMVVLSRSMAAEGMYPAIDPIASSSVLLDPLVVGGEHARIAIEVRRAVEHYRELQDVISLLGVEELGADDRRIVGRARRLQRFLTQPFAVTEAFTGVPGRSVPVADTLAGCKAILDGNCDDWQESSLYMVGTLDEAREREQATRNAKPVSEHAEP</sequence>
<feature type="chain" id="PRO_0000339499" description="ATP synthase subunit beta 3">
    <location>
        <begin position="1"/>
        <end position="493"/>
    </location>
</feature>
<feature type="region of interest" description="Disordered" evidence="2">
    <location>
        <begin position="113"/>
        <end position="138"/>
    </location>
</feature>
<feature type="binding site" evidence="1">
    <location>
        <begin position="170"/>
        <end position="177"/>
    </location>
    <ligand>
        <name>ATP</name>
        <dbReference type="ChEBI" id="CHEBI:30616"/>
    </ligand>
</feature>
<accession>Q13IW3</accession>
<comment type="function">
    <text evidence="1">Produces ATP from ADP in the presence of a proton gradient across the membrane. The catalytic sites are hosted primarily by the beta subunits.</text>
</comment>
<comment type="catalytic activity">
    <reaction evidence="1">
        <text>ATP + H2O + 4 H(+)(in) = ADP + phosphate + 5 H(+)(out)</text>
        <dbReference type="Rhea" id="RHEA:57720"/>
        <dbReference type="ChEBI" id="CHEBI:15377"/>
        <dbReference type="ChEBI" id="CHEBI:15378"/>
        <dbReference type="ChEBI" id="CHEBI:30616"/>
        <dbReference type="ChEBI" id="CHEBI:43474"/>
        <dbReference type="ChEBI" id="CHEBI:456216"/>
        <dbReference type="EC" id="7.1.2.2"/>
    </reaction>
</comment>
<comment type="subunit">
    <text evidence="1">F-type ATPases have 2 components, CF(1) - the catalytic core - and CF(0) - the membrane proton channel. CF(1) has five subunits: alpha(3), beta(3), gamma(1), delta(1), epsilon(1). CF(0) has three main subunits: a(1), b(2) and c(9-12). The alpha and beta chains form an alternating ring which encloses part of the gamma chain. CF(1) is attached to CF(0) by a central stalk formed by the gamma and epsilon chains, while a peripheral stalk is formed by the delta and b chains.</text>
</comment>
<comment type="subcellular location">
    <subcellularLocation>
        <location evidence="1">Cell inner membrane</location>
        <topology evidence="1">Peripheral membrane protein</topology>
    </subcellularLocation>
</comment>
<comment type="similarity">
    <text evidence="1">Belongs to the ATPase alpha/beta chains family.</text>
</comment>
<dbReference type="EC" id="7.1.2.2" evidence="1"/>
<dbReference type="EMBL" id="CP000272">
    <property type="protein sequence ID" value="ABE35976.1"/>
    <property type="molecule type" value="Genomic_DNA"/>
</dbReference>
<dbReference type="RefSeq" id="WP_011493236.1">
    <property type="nucleotide sequence ID" value="NC_007953.1"/>
</dbReference>
<dbReference type="SMR" id="Q13IW3"/>
<dbReference type="STRING" id="266265.Bxe_C0049"/>
<dbReference type="KEGG" id="bxb:DR64_8375"/>
<dbReference type="KEGG" id="bxe:Bxe_C0049"/>
<dbReference type="PATRIC" id="fig|266265.5.peg.7829"/>
<dbReference type="eggNOG" id="COG0055">
    <property type="taxonomic scope" value="Bacteria"/>
</dbReference>
<dbReference type="Proteomes" id="UP000001817">
    <property type="component" value="Chromosome 3"/>
</dbReference>
<dbReference type="GO" id="GO:0005886">
    <property type="term" value="C:plasma membrane"/>
    <property type="evidence" value="ECO:0007669"/>
    <property type="project" value="UniProtKB-SubCell"/>
</dbReference>
<dbReference type="GO" id="GO:0045259">
    <property type="term" value="C:proton-transporting ATP synthase complex"/>
    <property type="evidence" value="ECO:0007669"/>
    <property type="project" value="UniProtKB-KW"/>
</dbReference>
<dbReference type="GO" id="GO:0005524">
    <property type="term" value="F:ATP binding"/>
    <property type="evidence" value="ECO:0007669"/>
    <property type="project" value="UniProtKB-UniRule"/>
</dbReference>
<dbReference type="GO" id="GO:0016887">
    <property type="term" value="F:ATP hydrolysis activity"/>
    <property type="evidence" value="ECO:0007669"/>
    <property type="project" value="InterPro"/>
</dbReference>
<dbReference type="GO" id="GO:0046933">
    <property type="term" value="F:proton-transporting ATP synthase activity, rotational mechanism"/>
    <property type="evidence" value="ECO:0007669"/>
    <property type="project" value="UniProtKB-UniRule"/>
</dbReference>
<dbReference type="CDD" id="cd18110">
    <property type="entry name" value="ATP-synt_F1_beta_C"/>
    <property type="match status" value="1"/>
</dbReference>
<dbReference type="CDD" id="cd18115">
    <property type="entry name" value="ATP-synt_F1_beta_N"/>
    <property type="match status" value="1"/>
</dbReference>
<dbReference type="CDD" id="cd01133">
    <property type="entry name" value="F1-ATPase_beta_CD"/>
    <property type="match status" value="1"/>
</dbReference>
<dbReference type="Gene3D" id="2.40.10.170">
    <property type="match status" value="1"/>
</dbReference>
<dbReference type="Gene3D" id="1.10.1140.10">
    <property type="entry name" value="Bovine Mitochondrial F1-atpase, Atp Synthase Beta Chain, Chain D, domain 3"/>
    <property type="match status" value="1"/>
</dbReference>
<dbReference type="Gene3D" id="3.40.50.300">
    <property type="entry name" value="P-loop containing nucleotide triphosphate hydrolases"/>
    <property type="match status" value="1"/>
</dbReference>
<dbReference type="HAMAP" id="MF_01347">
    <property type="entry name" value="ATP_synth_beta_bact"/>
    <property type="match status" value="1"/>
</dbReference>
<dbReference type="InterPro" id="IPR003593">
    <property type="entry name" value="AAA+_ATPase"/>
</dbReference>
<dbReference type="InterPro" id="IPR055190">
    <property type="entry name" value="ATP-synt_VA_C"/>
</dbReference>
<dbReference type="InterPro" id="IPR005722">
    <property type="entry name" value="ATP_synth_F1_bsu"/>
</dbReference>
<dbReference type="InterPro" id="IPR020003">
    <property type="entry name" value="ATPase_a/bsu_AS"/>
</dbReference>
<dbReference type="InterPro" id="IPR050053">
    <property type="entry name" value="ATPase_alpha/beta_chains"/>
</dbReference>
<dbReference type="InterPro" id="IPR004100">
    <property type="entry name" value="ATPase_F1/V1/A1_a/bsu_N"/>
</dbReference>
<dbReference type="InterPro" id="IPR036121">
    <property type="entry name" value="ATPase_F1/V1/A1_a/bsu_N_sf"/>
</dbReference>
<dbReference type="InterPro" id="IPR000194">
    <property type="entry name" value="ATPase_F1/V1/A1_a/bsu_nucl-bd"/>
</dbReference>
<dbReference type="InterPro" id="IPR024034">
    <property type="entry name" value="ATPase_F1/V1_b/a_C"/>
</dbReference>
<dbReference type="InterPro" id="IPR027417">
    <property type="entry name" value="P-loop_NTPase"/>
</dbReference>
<dbReference type="NCBIfam" id="TIGR01039">
    <property type="entry name" value="atpD"/>
    <property type="match status" value="1"/>
</dbReference>
<dbReference type="PANTHER" id="PTHR15184">
    <property type="entry name" value="ATP SYNTHASE"/>
    <property type="match status" value="1"/>
</dbReference>
<dbReference type="PANTHER" id="PTHR15184:SF71">
    <property type="entry name" value="ATP SYNTHASE SUBUNIT BETA, MITOCHONDRIAL"/>
    <property type="match status" value="1"/>
</dbReference>
<dbReference type="Pfam" id="PF00006">
    <property type="entry name" value="ATP-synt_ab"/>
    <property type="match status" value="1"/>
</dbReference>
<dbReference type="Pfam" id="PF02874">
    <property type="entry name" value="ATP-synt_ab_N"/>
    <property type="match status" value="1"/>
</dbReference>
<dbReference type="Pfam" id="PF22919">
    <property type="entry name" value="ATP-synt_VA_C"/>
    <property type="match status" value="1"/>
</dbReference>
<dbReference type="SMART" id="SM00382">
    <property type="entry name" value="AAA"/>
    <property type="match status" value="1"/>
</dbReference>
<dbReference type="SUPFAM" id="SSF47917">
    <property type="entry name" value="C-terminal domain of alpha and beta subunits of F1 ATP synthase"/>
    <property type="match status" value="1"/>
</dbReference>
<dbReference type="SUPFAM" id="SSF50615">
    <property type="entry name" value="N-terminal domain of alpha and beta subunits of F1 ATP synthase"/>
    <property type="match status" value="1"/>
</dbReference>
<dbReference type="SUPFAM" id="SSF52540">
    <property type="entry name" value="P-loop containing nucleoside triphosphate hydrolases"/>
    <property type="match status" value="1"/>
</dbReference>
<dbReference type="PROSITE" id="PS00152">
    <property type="entry name" value="ATPASE_ALPHA_BETA"/>
    <property type="match status" value="1"/>
</dbReference>
<name>ATPB3_PARXL</name>
<protein>
    <recommendedName>
        <fullName evidence="1">ATP synthase subunit beta 3</fullName>
        <ecNumber evidence="1">7.1.2.2</ecNumber>
    </recommendedName>
    <alternativeName>
        <fullName evidence="1">ATP synthase F1 sector subunit beta 3</fullName>
    </alternativeName>
    <alternativeName>
        <fullName evidence="1">F-ATPase subunit beta 3</fullName>
    </alternativeName>
</protein>
<gene>
    <name evidence="1" type="primary">atpD3</name>
    <name type="ordered locus">Bxeno_C0048</name>
    <name type="ORF">Bxe_C0049</name>
</gene>
<proteinExistence type="inferred from homology"/>
<reference key="1">
    <citation type="journal article" date="2006" name="Proc. Natl. Acad. Sci. U.S.A.">
        <title>Burkholderia xenovorans LB400 harbors a multi-replicon, 9.73-Mbp genome shaped for versatility.</title>
        <authorList>
            <person name="Chain P.S.G."/>
            <person name="Denef V.J."/>
            <person name="Konstantinidis K.T."/>
            <person name="Vergez L.M."/>
            <person name="Agullo L."/>
            <person name="Reyes V.L."/>
            <person name="Hauser L."/>
            <person name="Cordova M."/>
            <person name="Gomez L."/>
            <person name="Gonzalez M."/>
            <person name="Land M."/>
            <person name="Lao V."/>
            <person name="Larimer F."/>
            <person name="LiPuma J.J."/>
            <person name="Mahenthiralingam E."/>
            <person name="Malfatti S.A."/>
            <person name="Marx C.J."/>
            <person name="Parnell J.J."/>
            <person name="Ramette A."/>
            <person name="Richardson P."/>
            <person name="Seeger M."/>
            <person name="Smith D."/>
            <person name="Spilker T."/>
            <person name="Sul W.J."/>
            <person name="Tsoi T.V."/>
            <person name="Ulrich L.E."/>
            <person name="Zhulin I.B."/>
            <person name="Tiedje J.M."/>
        </authorList>
    </citation>
    <scope>NUCLEOTIDE SEQUENCE [LARGE SCALE GENOMIC DNA]</scope>
    <source>
        <strain>LB400</strain>
    </source>
</reference>
<evidence type="ECO:0000255" key="1">
    <source>
        <dbReference type="HAMAP-Rule" id="MF_01347"/>
    </source>
</evidence>
<evidence type="ECO:0000256" key="2">
    <source>
        <dbReference type="SAM" id="MobiDB-lite"/>
    </source>
</evidence>
<keyword id="KW-0066">ATP synthesis</keyword>
<keyword id="KW-0067">ATP-binding</keyword>
<keyword id="KW-0997">Cell inner membrane</keyword>
<keyword id="KW-1003">Cell membrane</keyword>
<keyword id="KW-0139">CF(1)</keyword>
<keyword id="KW-0375">Hydrogen ion transport</keyword>
<keyword id="KW-0406">Ion transport</keyword>
<keyword id="KW-0472">Membrane</keyword>
<keyword id="KW-0547">Nucleotide-binding</keyword>
<keyword id="KW-1185">Reference proteome</keyword>
<keyword id="KW-1278">Translocase</keyword>
<keyword id="KW-0813">Transport</keyword>